<reference key="1">
    <citation type="journal article" date="2007" name="PLoS ONE">
        <title>Molecular correlates of host specialization in Staphylococcus aureus.</title>
        <authorList>
            <person name="Herron-Olson L."/>
            <person name="Fitzgerald J.R."/>
            <person name="Musser J.M."/>
            <person name="Kapur V."/>
        </authorList>
    </citation>
    <scope>NUCLEOTIDE SEQUENCE [LARGE SCALE GENOMIC DNA]</scope>
    <source>
        <strain>bovine RF122 / ET3-1</strain>
    </source>
</reference>
<accession>Q2YUU4</accession>
<sequence>MKFEKYIDHTLLKPESTRTQIDQIIDEAKAYNFKSVCVNPTHVKYAAERLADSEVLVCTVIGFPLGASTTATKAFETEDAIQNGADEIDMVINIGALKDGRFDDVQQDIEAVVKAAKGHTVKVIIETILLDHDEIVKASELTKAAGADFVKTSTGFAGGGATAEDVKLMKDTVGADVEVKASGGVRNLEDFNKMVEAGATRIGASAGVQIMQGLEADSDY</sequence>
<protein>
    <recommendedName>
        <fullName evidence="1">Deoxyribose-phosphate aldolase 1</fullName>
        <shortName evidence="1">DERA 1</shortName>
        <ecNumber evidence="1">4.1.2.4</ecNumber>
    </recommendedName>
    <alternativeName>
        <fullName evidence="1">2-deoxy-D-ribose 5-phosphate aldolase 1</fullName>
    </alternativeName>
    <alternativeName>
        <fullName evidence="1">Phosphodeoxyriboaldolase 1</fullName>
        <shortName evidence="1">Deoxyriboaldolase 1</shortName>
    </alternativeName>
</protein>
<proteinExistence type="inferred from homology"/>
<feature type="chain" id="PRO_0000231564" description="Deoxyribose-phosphate aldolase 1">
    <location>
        <begin position="1"/>
        <end position="220"/>
    </location>
</feature>
<feature type="active site" description="Proton donor/acceptor" evidence="1">
    <location>
        <position position="89"/>
    </location>
</feature>
<feature type="active site" description="Schiff-base intermediate with acetaldehyde" evidence="1">
    <location>
        <position position="151"/>
    </location>
</feature>
<feature type="active site" description="Proton donor/acceptor" evidence="1">
    <location>
        <position position="180"/>
    </location>
</feature>
<organism>
    <name type="scientific">Staphylococcus aureus (strain bovine RF122 / ET3-1)</name>
    <dbReference type="NCBI Taxonomy" id="273036"/>
    <lineage>
        <taxon>Bacteria</taxon>
        <taxon>Bacillati</taxon>
        <taxon>Bacillota</taxon>
        <taxon>Bacilli</taxon>
        <taxon>Bacillales</taxon>
        <taxon>Staphylococcaceae</taxon>
        <taxon>Staphylococcus</taxon>
    </lineage>
</organism>
<gene>
    <name evidence="1" type="primary">deoC1</name>
    <name type="ordered locus">SAB0077</name>
</gene>
<evidence type="ECO:0000255" key="1">
    <source>
        <dbReference type="HAMAP-Rule" id="MF_00114"/>
    </source>
</evidence>
<keyword id="KW-0963">Cytoplasm</keyword>
<keyword id="KW-0456">Lyase</keyword>
<keyword id="KW-0704">Schiff base</keyword>
<name>DEOC1_STAAB</name>
<dbReference type="EC" id="4.1.2.4" evidence="1"/>
<dbReference type="EMBL" id="AJ938182">
    <property type="protein sequence ID" value="CAI79765.1"/>
    <property type="molecule type" value="Genomic_DNA"/>
</dbReference>
<dbReference type="RefSeq" id="WP_000667263.1">
    <property type="nucleotide sequence ID" value="NC_007622.1"/>
</dbReference>
<dbReference type="SMR" id="Q2YUU4"/>
<dbReference type="KEGG" id="sab:SAB0077"/>
<dbReference type="HOGENOM" id="CLU_053595_0_1_9"/>
<dbReference type="UniPathway" id="UPA00002">
    <property type="reaction ID" value="UER00468"/>
</dbReference>
<dbReference type="GO" id="GO:0005737">
    <property type="term" value="C:cytoplasm"/>
    <property type="evidence" value="ECO:0007669"/>
    <property type="project" value="UniProtKB-SubCell"/>
</dbReference>
<dbReference type="GO" id="GO:0004139">
    <property type="term" value="F:deoxyribose-phosphate aldolase activity"/>
    <property type="evidence" value="ECO:0007669"/>
    <property type="project" value="UniProtKB-UniRule"/>
</dbReference>
<dbReference type="GO" id="GO:0006018">
    <property type="term" value="P:2-deoxyribose 1-phosphate catabolic process"/>
    <property type="evidence" value="ECO:0007669"/>
    <property type="project" value="UniProtKB-UniRule"/>
</dbReference>
<dbReference type="GO" id="GO:0016052">
    <property type="term" value="P:carbohydrate catabolic process"/>
    <property type="evidence" value="ECO:0007669"/>
    <property type="project" value="TreeGrafter"/>
</dbReference>
<dbReference type="GO" id="GO:0009264">
    <property type="term" value="P:deoxyribonucleotide catabolic process"/>
    <property type="evidence" value="ECO:0007669"/>
    <property type="project" value="InterPro"/>
</dbReference>
<dbReference type="CDD" id="cd00959">
    <property type="entry name" value="DeoC"/>
    <property type="match status" value="1"/>
</dbReference>
<dbReference type="FunFam" id="3.20.20.70:FF:000044">
    <property type="entry name" value="Deoxyribose-phosphate aldolase"/>
    <property type="match status" value="1"/>
</dbReference>
<dbReference type="Gene3D" id="3.20.20.70">
    <property type="entry name" value="Aldolase class I"/>
    <property type="match status" value="1"/>
</dbReference>
<dbReference type="HAMAP" id="MF_00114">
    <property type="entry name" value="DeoC_type1"/>
    <property type="match status" value="1"/>
</dbReference>
<dbReference type="InterPro" id="IPR013785">
    <property type="entry name" value="Aldolase_TIM"/>
</dbReference>
<dbReference type="InterPro" id="IPR011343">
    <property type="entry name" value="DeoC"/>
</dbReference>
<dbReference type="InterPro" id="IPR002915">
    <property type="entry name" value="DeoC/FbaB/LacD_aldolase"/>
</dbReference>
<dbReference type="InterPro" id="IPR028581">
    <property type="entry name" value="DeoC_typeI"/>
</dbReference>
<dbReference type="NCBIfam" id="TIGR00126">
    <property type="entry name" value="deoC"/>
    <property type="match status" value="1"/>
</dbReference>
<dbReference type="PANTHER" id="PTHR10889">
    <property type="entry name" value="DEOXYRIBOSE-PHOSPHATE ALDOLASE"/>
    <property type="match status" value="1"/>
</dbReference>
<dbReference type="PANTHER" id="PTHR10889:SF1">
    <property type="entry name" value="DEOXYRIBOSE-PHOSPHATE ALDOLASE"/>
    <property type="match status" value="1"/>
</dbReference>
<dbReference type="Pfam" id="PF01791">
    <property type="entry name" value="DeoC"/>
    <property type="match status" value="1"/>
</dbReference>
<dbReference type="PIRSF" id="PIRSF001357">
    <property type="entry name" value="DeoC"/>
    <property type="match status" value="1"/>
</dbReference>
<dbReference type="SMART" id="SM01133">
    <property type="entry name" value="DeoC"/>
    <property type="match status" value="1"/>
</dbReference>
<dbReference type="SUPFAM" id="SSF51569">
    <property type="entry name" value="Aldolase"/>
    <property type="match status" value="1"/>
</dbReference>
<comment type="function">
    <text evidence="1">Catalyzes a reversible aldol reaction between acetaldehyde and D-glyceraldehyde 3-phosphate to generate 2-deoxy-D-ribose 5-phosphate.</text>
</comment>
<comment type="catalytic activity">
    <reaction evidence="1">
        <text>2-deoxy-D-ribose 5-phosphate = D-glyceraldehyde 3-phosphate + acetaldehyde</text>
        <dbReference type="Rhea" id="RHEA:12821"/>
        <dbReference type="ChEBI" id="CHEBI:15343"/>
        <dbReference type="ChEBI" id="CHEBI:59776"/>
        <dbReference type="ChEBI" id="CHEBI:62877"/>
        <dbReference type="EC" id="4.1.2.4"/>
    </reaction>
</comment>
<comment type="pathway">
    <text evidence="1">Carbohydrate degradation; 2-deoxy-D-ribose 1-phosphate degradation; D-glyceraldehyde 3-phosphate and acetaldehyde from 2-deoxy-alpha-D-ribose 1-phosphate: step 2/2.</text>
</comment>
<comment type="subcellular location">
    <subcellularLocation>
        <location evidence="1">Cytoplasm</location>
    </subcellularLocation>
</comment>
<comment type="similarity">
    <text evidence="1">Belongs to the DeoC/FbaB aldolase family. DeoC type 1 subfamily.</text>
</comment>